<accession>Q0I6K2</accession>
<comment type="function">
    <text evidence="1">Catalyzes the reversible conversion of 2-phosphoglycerate (2-PG) into phosphoenolpyruvate (PEP). It is essential for the degradation of carbohydrates via glycolysis.</text>
</comment>
<comment type="catalytic activity">
    <reaction evidence="1">
        <text>(2R)-2-phosphoglycerate = phosphoenolpyruvate + H2O</text>
        <dbReference type="Rhea" id="RHEA:10164"/>
        <dbReference type="ChEBI" id="CHEBI:15377"/>
        <dbReference type="ChEBI" id="CHEBI:58289"/>
        <dbReference type="ChEBI" id="CHEBI:58702"/>
        <dbReference type="EC" id="4.2.1.11"/>
    </reaction>
</comment>
<comment type="cofactor">
    <cofactor evidence="1">
        <name>Mg(2+)</name>
        <dbReference type="ChEBI" id="CHEBI:18420"/>
    </cofactor>
    <text evidence="1">Binds a second Mg(2+) ion via substrate during catalysis.</text>
</comment>
<comment type="pathway">
    <text evidence="1">Carbohydrate degradation; glycolysis; pyruvate from D-glyceraldehyde 3-phosphate: step 4/5.</text>
</comment>
<comment type="subcellular location">
    <subcellularLocation>
        <location evidence="1">Cytoplasm</location>
    </subcellularLocation>
    <subcellularLocation>
        <location evidence="1">Secreted</location>
    </subcellularLocation>
    <subcellularLocation>
        <location evidence="1">Cell surface</location>
    </subcellularLocation>
    <text evidence="1">Fractions of enolase are present in both the cytoplasm and on the cell surface.</text>
</comment>
<comment type="similarity">
    <text evidence="1">Belongs to the enolase family.</text>
</comment>
<protein>
    <recommendedName>
        <fullName evidence="1">Enolase</fullName>
        <ecNumber evidence="1">4.2.1.11</ecNumber>
    </recommendedName>
    <alternativeName>
        <fullName evidence="1">2-phospho-D-glycerate hydro-lyase</fullName>
    </alternativeName>
    <alternativeName>
        <fullName evidence="1">2-phosphoglycerate dehydratase</fullName>
    </alternativeName>
</protein>
<gene>
    <name evidence="1" type="primary">eno</name>
    <name type="ordered locus">sync_2732</name>
</gene>
<proteinExistence type="inferred from homology"/>
<evidence type="ECO:0000255" key="1">
    <source>
        <dbReference type="HAMAP-Rule" id="MF_00318"/>
    </source>
</evidence>
<dbReference type="EC" id="4.2.1.11" evidence="1"/>
<dbReference type="EMBL" id="CP000435">
    <property type="protein sequence ID" value="ABI46249.1"/>
    <property type="molecule type" value="Genomic_DNA"/>
</dbReference>
<dbReference type="RefSeq" id="WP_011620624.1">
    <property type="nucleotide sequence ID" value="NC_008319.1"/>
</dbReference>
<dbReference type="SMR" id="Q0I6K2"/>
<dbReference type="STRING" id="64471.sync_2732"/>
<dbReference type="KEGG" id="syg:sync_2732"/>
<dbReference type="eggNOG" id="COG0148">
    <property type="taxonomic scope" value="Bacteria"/>
</dbReference>
<dbReference type="HOGENOM" id="CLU_031223_2_1_3"/>
<dbReference type="OrthoDB" id="9804716at2"/>
<dbReference type="UniPathway" id="UPA00109">
    <property type="reaction ID" value="UER00187"/>
</dbReference>
<dbReference type="Proteomes" id="UP000001961">
    <property type="component" value="Chromosome"/>
</dbReference>
<dbReference type="GO" id="GO:0009986">
    <property type="term" value="C:cell surface"/>
    <property type="evidence" value="ECO:0007669"/>
    <property type="project" value="UniProtKB-SubCell"/>
</dbReference>
<dbReference type="GO" id="GO:0005576">
    <property type="term" value="C:extracellular region"/>
    <property type="evidence" value="ECO:0007669"/>
    <property type="project" value="UniProtKB-SubCell"/>
</dbReference>
<dbReference type="GO" id="GO:0000015">
    <property type="term" value="C:phosphopyruvate hydratase complex"/>
    <property type="evidence" value="ECO:0007669"/>
    <property type="project" value="InterPro"/>
</dbReference>
<dbReference type="GO" id="GO:0000287">
    <property type="term" value="F:magnesium ion binding"/>
    <property type="evidence" value="ECO:0007669"/>
    <property type="project" value="UniProtKB-UniRule"/>
</dbReference>
<dbReference type="GO" id="GO:0004634">
    <property type="term" value="F:phosphopyruvate hydratase activity"/>
    <property type="evidence" value="ECO:0007669"/>
    <property type="project" value="UniProtKB-UniRule"/>
</dbReference>
<dbReference type="GO" id="GO:0006096">
    <property type="term" value="P:glycolytic process"/>
    <property type="evidence" value="ECO:0007669"/>
    <property type="project" value="UniProtKB-UniRule"/>
</dbReference>
<dbReference type="CDD" id="cd03313">
    <property type="entry name" value="enolase"/>
    <property type="match status" value="1"/>
</dbReference>
<dbReference type="FunFam" id="3.20.20.120:FF:000001">
    <property type="entry name" value="Enolase"/>
    <property type="match status" value="1"/>
</dbReference>
<dbReference type="FunFam" id="3.30.390.10:FF:000001">
    <property type="entry name" value="Enolase"/>
    <property type="match status" value="1"/>
</dbReference>
<dbReference type="Gene3D" id="3.20.20.120">
    <property type="entry name" value="Enolase-like C-terminal domain"/>
    <property type="match status" value="1"/>
</dbReference>
<dbReference type="Gene3D" id="3.30.390.10">
    <property type="entry name" value="Enolase-like, N-terminal domain"/>
    <property type="match status" value="1"/>
</dbReference>
<dbReference type="HAMAP" id="MF_00318">
    <property type="entry name" value="Enolase"/>
    <property type="match status" value="1"/>
</dbReference>
<dbReference type="InterPro" id="IPR000941">
    <property type="entry name" value="Enolase"/>
</dbReference>
<dbReference type="InterPro" id="IPR036849">
    <property type="entry name" value="Enolase-like_C_sf"/>
</dbReference>
<dbReference type="InterPro" id="IPR029017">
    <property type="entry name" value="Enolase-like_N"/>
</dbReference>
<dbReference type="InterPro" id="IPR020810">
    <property type="entry name" value="Enolase_C"/>
</dbReference>
<dbReference type="InterPro" id="IPR020809">
    <property type="entry name" value="Enolase_CS"/>
</dbReference>
<dbReference type="InterPro" id="IPR020811">
    <property type="entry name" value="Enolase_N"/>
</dbReference>
<dbReference type="NCBIfam" id="TIGR01060">
    <property type="entry name" value="eno"/>
    <property type="match status" value="1"/>
</dbReference>
<dbReference type="PANTHER" id="PTHR11902">
    <property type="entry name" value="ENOLASE"/>
    <property type="match status" value="1"/>
</dbReference>
<dbReference type="PANTHER" id="PTHR11902:SF1">
    <property type="entry name" value="ENOLASE"/>
    <property type="match status" value="1"/>
</dbReference>
<dbReference type="Pfam" id="PF00113">
    <property type="entry name" value="Enolase_C"/>
    <property type="match status" value="1"/>
</dbReference>
<dbReference type="Pfam" id="PF03952">
    <property type="entry name" value="Enolase_N"/>
    <property type="match status" value="1"/>
</dbReference>
<dbReference type="PIRSF" id="PIRSF001400">
    <property type="entry name" value="Enolase"/>
    <property type="match status" value="1"/>
</dbReference>
<dbReference type="PRINTS" id="PR00148">
    <property type="entry name" value="ENOLASE"/>
</dbReference>
<dbReference type="SFLD" id="SFLDS00001">
    <property type="entry name" value="Enolase"/>
    <property type="match status" value="1"/>
</dbReference>
<dbReference type="SFLD" id="SFLDF00002">
    <property type="entry name" value="enolase"/>
    <property type="match status" value="1"/>
</dbReference>
<dbReference type="SMART" id="SM01192">
    <property type="entry name" value="Enolase_C"/>
    <property type="match status" value="1"/>
</dbReference>
<dbReference type="SMART" id="SM01193">
    <property type="entry name" value="Enolase_N"/>
    <property type="match status" value="1"/>
</dbReference>
<dbReference type="SUPFAM" id="SSF51604">
    <property type="entry name" value="Enolase C-terminal domain-like"/>
    <property type="match status" value="1"/>
</dbReference>
<dbReference type="SUPFAM" id="SSF54826">
    <property type="entry name" value="Enolase N-terminal domain-like"/>
    <property type="match status" value="1"/>
</dbReference>
<dbReference type="PROSITE" id="PS00164">
    <property type="entry name" value="ENOLASE"/>
    <property type="match status" value="1"/>
</dbReference>
<sequence length="430" mass="45472">MLDSLDLVIDTIVAREVLDSRGNPTVEAEVLLEGGASGRAIVPSGASTGAHEAHELRDGGDRYMGKGVTKAVDHIEERIAPALCGLSALDQGSVDAAMLELDGSDNKSGLGANAILAVSMATARAAANGLGLPLYRYLGGPMATLLPVPLMNVINGGAHAANNLDFQEFMLVPHGAPNFREALRMGTEVFHTLKNLLSERGMSTSVGDEGGFAPDLGNEEAGEVLVQAIEKAGYKPGEQISLALDVASTEFYSDGRYAFSGGSYSSAEMVDQLEQLVNRFPIISIEDGLAEDDWEGWALLTERLGKRVQLVGDDLFVTNTKRLQRGIDANTANSILIKVNQIGSLTETLQAIDLAGRSGYTSVISHRSGETEDTTIADLAVATRAGQIKTGSLSRSERVAKYNQLLRIEDELGDQAVYAGATGQGPRGRD</sequence>
<name>ENO_SYNS3</name>
<reference key="1">
    <citation type="journal article" date="2006" name="Proc. Natl. Acad. Sci. U.S.A.">
        <title>Genome sequence of Synechococcus CC9311: insights into adaptation to a coastal environment.</title>
        <authorList>
            <person name="Palenik B."/>
            <person name="Ren Q."/>
            <person name="Dupont C.L."/>
            <person name="Myers G.S."/>
            <person name="Heidelberg J.F."/>
            <person name="Badger J.H."/>
            <person name="Madupu R."/>
            <person name="Nelson W.C."/>
            <person name="Brinkac L.M."/>
            <person name="Dodson R.J."/>
            <person name="Durkin A.S."/>
            <person name="Daugherty S.C."/>
            <person name="Sullivan S.A."/>
            <person name="Khouri H."/>
            <person name="Mohamoud Y."/>
            <person name="Halpin R."/>
            <person name="Paulsen I.T."/>
        </authorList>
    </citation>
    <scope>NUCLEOTIDE SEQUENCE [LARGE SCALE GENOMIC DNA]</scope>
    <source>
        <strain>CC9311</strain>
    </source>
</reference>
<keyword id="KW-0963">Cytoplasm</keyword>
<keyword id="KW-0324">Glycolysis</keyword>
<keyword id="KW-0456">Lyase</keyword>
<keyword id="KW-0460">Magnesium</keyword>
<keyword id="KW-0479">Metal-binding</keyword>
<keyword id="KW-1185">Reference proteome</keyword>
<keyword id="KW-0964">Secreted</keyword>
<organism>
    <name type="scientific">Synechococcus sp. (strain CC9311)</name>
    <dbReference type="NCBI Taxonomy" id="64471"/>
    <lineage>
        <taxon>Bacteria</taxon>
        <taxon>Bacillati</taxon>
        <taxon>Cyanobacteriota</taxon>
        <taxon>Cyanophyceae</taxon>
        <taxon>Synechococcales</taxon>
        <taxon>Synechococcaceae</taxon>
        <taxon>Synechococcus</taxon>
    </lineage>
</organism>
<feature type="chain" id="PRO_0000267121" description="Enolase">
    <location>
        <begin position="1"/>
        <end position="430"/>
    </location>
</feature>
<feature type="active site" description="Proton donor" evidence="1">
    <location>
        <position position="209"/>
    </location>
</feature>
<feature type="active site" description="Proton acceptor" evidence="1">
    <location>
        <position position="338"/>
    </location>
</feature>
<feature type="binding site" evidence="1">
    <location>
        <position position="167"/>
    </location>
    <ligand>
        <name>(2R)-2-phosphoglycerate</name>
        <dbReference type="ChEBI" id="CHEBI:58289"/>
    </ligand>
</feature>
<feature type="binding site" evidence="1">
    <location>
        <position position="245"/>
    </location>
    <ligand>
        <name>Mg(2+)</name>
        <dbReference type="ChEBI" id="CHEBI:18420"/>
    </ligand>
</feature>
<feature type="binding site" evidence="1">
    <location>
        <position position="286"/>
    </location>
    <ligand>
        <name>Mg(2+)</name>
        <dbReference type="ChEBI" id="CHEBI:18420"/>
    </ligand>
</feature>
<feature type="binding site" evidence="1">
    <location>
        <position position="313"/>
    </location>
    <ligand>
        <name>Mg(2+)</name>
        <dbReference type="ChEBI" id="CHEBI:18420"/>
    </ligand>
</feature>
<feature type="binding site" evidence="1">
    <location>
        <position position="338"/>
    </location>
    <ligand>
        <name>(2R)-2-phosphoglycerate</name>
        <dbReference type="ChEBI" id="CHEBI:58289"/>
    </ligand>
</feature>
<feature type="binding site" evidence="1">
    <location>
        <position position="367"/>
    </location>
    <ligand>
        <name>(2R)-2-phosphoglycerate</name>
        <dbReference type="ChEBI" id="CHEBI:58289"/>
    </ligand>
</feature>
<feature type="binding site" evidence="1">
    <location>
        <position position="368"/>
    </location>
    <ligand>
        <name>(2R)-2-phosphoglycerate</name>
        <dbReference type="ChEBI" id="CHEBI:58289"/>
    </ligand>
</feature>
<feature type="binding site" evidence="1">
    <location>
        <position position="389"/>
    </location>
    <ligand>
        <name>(2R)-2-phosphoglycerate</name>
        <dbReference type="ChEBI" id="CHEBI:58289"/>
    </ligand>
</feature>